<protein>
    <recommendedName>
        <fullName evidence="1">Elongation factor 2</fullName>
        <shortName evidence="1">EF-2</shortName>
    </recommendedName>
</protein>
<comment type="function">
    <text evidence="1">Catalyzes the GTP-dependent ribosomal translocation step during translation elongation. During this step, the ribosome changes from the pre-translocational (PRE) to the post-translocational (POST) state as the newly formed A-site-bound peptidyl-tRNA and P-site-bound deacylated tRNA move to the P and E sites, respectively. Catalyzes the coordinated movement of the two tRNA molecules, the mRNA and conformational changes in the ribosome.</text>
</comment>
<comment type="subcellular location">
    <subcellularLocation>
        <location evidence="1">Cytoplasm</location>
    </subcellularLocation>
</comment>
<comment type="similarity">
    <text evidence="1">Belongs to the TRAFAC class translation factor GTPase superfamily. Classic translation factor GTPase family. EF-G/EF-2 subfamily.</text>
</comment>
<keyword id="KW-0963">Cytoplasm</keyword>
<keyword id="KW-0251">Elongation factor</keyword>
<keyword id="KW-0342">GTP-binding</keyword>
<keyword id="KW-0547">Nucleotide-binding</keyword>
<keyword id="KW-0648">Protein biosynthesis</keyword>
<gene>
    <name evidence="1" type="primary">fusA</name>
    <name type="ordered locus">MM_2265</name>
</gene>
<organism>
    <name type="scientific">Methanosarcina mazei (strain ATCC BAA-159 / DSM 3647 / Goe1 / Go1 / JCM 11833 / OCM 88)</name>
    <name type="common">Methanosarcina frisia</name>
    <dbReference type="NCBI Taxonomy" id="192952"/>
    <lineage>
        <taxon>Archaea</taxon>
        <taxon>Methanobacteriati</taxon>
        <taxon>Methanobacteriota</taxon>
        <taxon>Stenosarchaea group</taxon>
        <taxon>Methanomicrobia</taxon>
        <taxon>Methanosarcinales</taxon>
        <taxon>Methanosarcinaceae</taxon>
        <taxon>Methanosarcina</taxon>
    </lineage>
</organism>
<name>EF2_METMA</name>
<proteinExistence type="inferred from homology"/>
<sequence length="730" mass="80504">MGRRKKMVERVTTLMNDPQRIRNIGIVAHIDHGKTTLSDNLLAGAGMISKELAGRQLFMDSDEEEQARGITIDASNVSMVHTFDNEDYLINLIDTPGHVDFGGDVTRAMRAVDGAVVVVDAVEGTMPQTETVLRQALREHVRPVLFVNKVDRLINELQVDSQEMQVRLGKVIDHVNKLIKNMNPEKFKAGWKVDAAAGTVAFGSALYNWAISVPMMKKTGVSFNDVYEYCKAGDMKTLAEKCPLHEAVLDMVIHFLPNPLVAQQGRVKVIWHGDENSEVGKSMTHAHADGDLAFMVTDISVDPHAGEVATGRLFSGSLTRGMEVYTSGTAKKSRVQQVGIFMGPERLEVDKIPAGNIAAVTGLKDAIVGSTVTTLDGMTPFESIRHVSEPVVTVAVEAKHTKDLPKLIEVLRQVAKEDPTLQITLDEETGEHLMAGMGELHLEVIAHRIERDKNVEITTSKPIVVYRETIKKKTEPIEGKSPNRHNRFYISVEPLDLEIVSAIKEGEITMNMPELERRQKLIELGMDKEQAKGIAGIFNSNIFIDQTKGIQYLNETMELVLDGFEEVMRAGPLTREPVANVKCVLVDAKLHEDAIHRGPAQIIPASRQAIQAGMLMAEDSLLEPYQKVFVQVPQLLMGGATKELQGRRGVILNMTTEGDLAIIEARVPVAEMFGFAGEIRSATEGRAMWSTEFGGFDVVPSSILTEIVGQIRERKGLKKDLPKASDYLSM</sequence>
<dbReference type="EMBL" id="AE008384">
    <property type="protein sequence ID" value="AAM31961.1"/>
    <property type="molecule type" value="Genomic_DNA"/>
</dbReference>
<dbReference type="RefSeq" id="WP_011034192.1">
    <property type="nucleotide sequence ID" value="NC_003901.1"/>
</dbReference>
<dbReference type="SMR" id="Q8PUR7"/>
<dbReference type="KEGG" id="mma:MM_2265"/>
<dbReference type="PATRIC" id="fig|192952.21.peg.2595"/>
<dbReference type="eggNOG" id="arCOG01559">
    <property type="taxonomic scope" value="Archaea"/>
</dbReference>
<dbReference type="HOGENOM" id="CLU_002794_11_1_2"/>
<dbReference type="Proteomes" id="UP000000595">
    <property type="component" value="Chromosome"/>
</dbReference>
<dbReference type="GO" id="GO:0005829">
    <property type="term" value="C:cytosol"/>
    <property type="evidence" value="ECO:0007669"/>
    <property type="project" value="TreeGrafter"/>
</dbReference>
<dbReference type="GO" id="GO:1990904">
    <property type="term" value="C:ribonucleoprotein complex"/>
    <property type="evidence" value="ECO:0007669"/>
    <property type="project" value="TreeGrafter"/>
</dbReference>
<dbReference type="GO" id="GO:0005525">
    <property type="term" value="F:GTP binding"/>
    <property type="evidence" value="ECO:0007669"/>
    <property type="project" value="UniProtKB-UniRule"/>
</dbReference>
<dbReference type="GO" id="GO:0003924">
    <property type="term" value="F:GTPase activity"/>
    <property type="evidence" value="ECO:0007669"/>
    <property type="project" value="InterPro"/>
</dbReference>
<dbReference type="GO" id="GO:0003746">
    <property type="term" value="F:translation elongation factor activity"/>
    <property type="evidence" value="ECO:0007669"/>
    <property type="project" value="UniProtKB-UniRule"/>
</dbReference>
<dbReference type="CDD" id="cd01681">
    <property type="entry name" value="aeEF2_snRNP_like_IV"/>
    <property type="match status" value="1"/>
</dbReference>
<dbReference type="CDD" id="cd16268">
    <property type="entry name" value="EF2_II"/>
    <property type="match status" value="1"/>
</dbReference>
<dbReference type="CDD" id="cd16261">
    <property type="entry name" value="EF2_snRNP_III"/>
    <property type="match status" value="1"/>
</dbReference>
<dbReference type="CDD" id="cd01514">
    <property type="entry name" value="Elongation_Factor_C"/>
    <property type="match status" value="1"/>
</dbReference>
<dbReference type="FunFam" id="3.30.230.10:FF:000009">
    <property type="entry name" value="116 kDa U5 small nuclear ribonucleoprotein component"/>
    <property type="match status" value="1"/>
</dbReference>
<dbReference type="FunFam" id="2.40.30.10:FF:000110">
    <property type="entry name" value="Elongation factor 2"/>
    <property type="match status" value="1"/>
</dbReference>
<dbReference type="FunFam" id="3.30.70.240:FF:000010">
    <property type="entry name" value="Elongation factor 2"/>
    <property type="match status" value="1"/>
</dbReference>
<dbReference type="FunFam" id="3.40.50.300:FF:000684">
    <property type="entry name" value="Elongation factor 2"/>
    <property type="match status" value="1"/>
</dbReference>
<dbReference type="FunFam" id="3.30.70.870:FF:000002">
    <property type="entry name" value="Translation elongation factor 2"/>
    <property type="match status" value="1"/>
</dbReference>
<dbReference type="Gene3D" id="3.30.230.10">
    <property type="match status" value="1"/>
</dbReference>
<dbReference type="Gene3D" id="3.30.70.240">
    <property type="match status" value="1"/>
</dbReference>
<dbReference type="Gene3D" id="3.30.70.870">
    <property type="entry name" value="Elongation Factor G (Translational Gtpase), domain 3"/>
    <property type="match status" value="1"/>
</dbReference>
<dbReference type="Gene3D" id="3.40.50.300">
    <property type="entry name" value="P-loop containing nucleotide triphosphate hydrolases"/>
    <property type="match status" value="1"/>
</dbReference>
<dbReference type="Gene3D" id="2.40.30.10">
    <property type="entry name" value="Translation factors"/>
    <property type="match status" value="1"/>
</dbReference>
<dbReference type="HAMAP" id="MF_00054_A">
    <property type="entry name" value="EF_G_EF_2_A"/>
    <property type="match status" value="1"/>
</dbReference>
<dbReference type="InterPro" id="IPR041095">
    <property type="entry name" value="EFG_II"/>
</dbReference>
<dbReference type="InterPro" id="IPR035647">
    <property type="entry name" value="EFG_III/V"/>
</dbReference>
<dbReference type="InterPro" id="IPR000640">
    <property type="entry name" value="EFG_V-like"/>
</dbReference>
<dbReference type="InterPro" id="IPR004161">
    <property type="entry name" value="EFTu-like_2"/>
</dbReference>
<dbReference type="InterPro" id="IPR031157">
    <property type="entry name" value="G_TR_CS"/>
</dbReference>
<dbReference type="InterPro" id="IPR027417">
    <property type="entry name" value="P-loop_NTPase"/>
</dbReference>
<dbReference type="InterPro" id="IPR020568">
    <property type="entry name" value="Ribosomal_Su5_D2-typ_SF"/>
</dbReference>
<dbReference type="InterPro" id="IPR014721">
    <property type="entry name" value="Ribsml_uS5_D2-typ_fold_subgr"/>
</dbReference>
<dbReference type="InterPro" id="IPR005225">
    <property type="entry name" value="Small_GTP-bd"/>
</dbReference>
<dbReference type="InterPro" id="IPR000795">
    <property type="entry name" value="T_Tr_GTP-bd_dom"/>
</dbReference>
<dbReference type="InterPro" id="IPR009000">
    <property type="entry name" value="Transl_B-barrel_sf"/>
</dbReference>
<dbReference type="InterPro" id="IPR004543">
    <property type="entry name" value="Transl_elong_EFG/EF2_arc"/>
</dbReference>
<dbReference type="InterPro" id="IPR005517">
    <property type="entry name" value="Transl_elong_EFG/EF2_IV"/>
</dbReference>
<dbReference type="NCBIfam" id="TIGR00490">
    <property type="entry name" value="aEF-2"/>
    <property type="match status" value="1"/>
</dbReference>
<dbReference type="NCBIfam" id="TIGR00231">
    <property type="entry name" value="small_GTP"/>
    <property type="match status" value="1"/>
</dbReference>
<dbReference type="PANTHER" id="PTHR42908:SF3">
    <property type="entry name" value="ELONGATION FACTOR-LIKE GTPASE 1"/>
    <property type="match status" value="1"/>
</dbReference>
<dbReference type="PANTHER" id="PTHR42908">
    <property type="entry name" value="TRANSLATION ELONGATION FACTOR-RELATED"/>
    <property type="match status" value="1"/>
</dbReference>
<dbReference type="Pfam" id="PF00679">
    <property type="entry name" value="EFG_C"/>
    <property type="match status" value="1"/>
</dbReference>
<dbReference type="Pfam" id="PF14492">
    <property type="entry name" value="EFG_III"/>
    <property type="match status" value="1"/>
</dbReference>
<dbReference type="Pfam" id="PF03764">
    <property type="entry name" value="EFG_IV"/>
    <property type="match status" value="1"/>
</dbReference>
<dbReference type="Pfam" id="PF00009">
    <property type="entry name" value="GTP_EFTU"/>
    <property type="match status" value="1"/>
</dbReference>
<dbReference type="Pfam" id="PF03144">
    <property type="entry name" value="GTP_EFTU_D2"/>
    <property type="match status" value="1"/>
</dbReference>
<dbReference type="PRINTS" id="PR00315">
    <property type="entry name" value="ELONGATNFCT"/>
</dbReference>
<dbReference type="SMART" id="SM00838">
    <property type="entry name" value="EFG_C"/>
    <property type="match status" value="1"/>
</dbReference>
<dbReference type="SMART" id="SM00889">
    <property type="entry name" value="EFG_IV"/>
    <property type="match status" value="1"/>
</dbReference>
<dbReference type="SUPFAM" id="SSF54980">
    <property type="entry name" value="EF-G C-terminal domain-like"/>
    <property type="match status" value="2"/>
</dbReference>
<dbReference type="SUPFAM" id="SSF52540">
    <property type="entry name" value="P-loop containing nucleoside triphosphate hydrolases"/>
    <property type="match status" value="1"/>
</dbReference>
<dbReference type="SUPFAM" id="SSF54211">
    <property type="entry name" value="Ribosomal protein S5 domain 2-like"/>
    <property type="match status" value="1"/>
</dbReference>
<dbReference type="SUPFAM" id="SSF50447">
    <property type="entry name" value="Translation proteins"/>
    <property type="match status" value="1"/>
</dbReference>
<dbReference type="PROSITE" id="PS00301">
    <property type="entry name" value="G_TR_1"/>
    <property type="match status" value="1"/>
</dbReference>
<dbReference type="PROSITE" id="PS51722">
    <property type="entry name" value="G_TR_2"/>
    <property type="match status" value="1"/>
</dbReference>
<reference key="1">
    <citation type="journal article" date="2002" name="J. Mol. Microbiol. Biotechnol.">
        <title>The genome of Methanosarcina mazei: evidence for lateral gene transfer between Bacteria and Archaea.</title>
        <authorList>
            <person name="Deppenmeier U."/>
            <person name="Johann A."/>
            <person name="Hartsch T."/>
            <person name="Merkl R."/>
            <person name="Schmitz R.A."/>
            <person name="Martinez-Arias R."/>
            <person name="Henne A."/>
            <person name="Wiezer A."/>
            <person name="Baeumer S."/>
            <person name="Jacobi C."/>
            <person name="Brueggemann H."/>
            <person name="Lienard T."/>
            <person name="Christmann A."/>
            <person name="Boemecke M."/>
            <person name="Steckel S."/>
            <person name="Bhattacharyya A."/>
            <person name="Lykidis A."/>
            <person name="Overbeek R."/>
            <person name="Klenk H.-P."/>
            <person name="Gunsalus R.P."/>
            <person name="Fritz H.-J."/>
            <person name="Gottschalk G."/>
        </authorList>
    </citation>
    <scope>NUCLEOTIDE SEQUENCE [LARGE SCALE GENOMIC DNA]</scope>
    <source>
        <strain>ATCC BAA-159 / DSM 3647 / Goe1 / Go1 / JCM 11833 / OCM 88</strain>
    </source>
</reference>
<accession>Q8PUR7</accession>
<feature type="chain" id="PRO_0000091033" description="Elongation factor 2">
    <location>
        <begin position="1"/>
        <end position="730"/>
    </location>
</feature>
<feature type="domain" description="tr-type G">
    <location>
        <begin position="19"/>
        <end position="260"/>
    </location>
</feature>
<feature type="binding site" evidence="1">
    <location>
        <begin position="28"/>
        <end position="35"/>
    </location>
    <ligand>
        <name>GTP</name>
        <dbReference type="ChEBI" id="CHEBI:37565"/>
    </ligand>
</feature>
<feature type="binding site" evidence="1">
    <location>
        <begin position="94"/>
        <end position="98"/>
    </location>
    <ligand>
        <name>GTP</name>
        <dbReference type="ChEBI" id="CHEBI:37565"/>
    </ligand>
</feature>
<feature type="binding site" evidence="1">
    <location>
        <begin position="148"/>
        <end position="151"/>
    </location>
    <ligand>
        <name>GTP</name>
        <dbReference type="ChEBI" id="CHEBI:37565"/>
    </ligand>
</feature>
<feature type="modified residue" description="Diphthamide" evidence="1">
    <location>
        <position position="596"/>
    </location>
</feature>
<evidence type="ECO:0000255" key="1">
    <source>
        <dbReference type="HAMAP-Rule" id="MF_00054"/>
    </source>
</evidence>